<organism>
    <name type="scientific">Clostridium botulinum (strain Loch Maree / Type A3)</name>
    <dbReference type="NCBI Taxonomy" id="498214"/>
    <lineage>
        <taxon>Bacteria</taxon>
        <taxon>Bacillati</taxon>
        <taxon>Bacillota</taxon>
        <taxon>Clostridia</taxon>
        <taxon>Eubacteriales</taxon>
        <taxon>Clostridiaceae</taxon>
        <taxon>Clostridium</taxon>
    </lineage>
</organism>
<feature type="chain" id="PRO_1000095353" description="Arginine--tRNA ligase">
    <location>
        <begin position="1"/>
        <end position="563"/>
    </location>
</feature>
<feature type="short sequence motif" description="'HIGH' region">
    <location>
        <begin position="120"/>
        <end position="130"/>
    </location>
</feature>
<accession>B1KYT1</accession>
<proteinExistence type="inferred from homology"/>
<dbReference type="EC" id="6.1.1.19" evidence="1"/>
<dbReference type="EMBL" id="CP000962">
    <property type="protein sequence ID" value="ACA55304.1"/>
    <property type="molecule type" value="Genomic_DNA"/>
</dbReference>
<dbReference type="RefSeq" id="WP_012343306.1">
    <property type="nucleotide sequence ID" value="NC_010520.1"/>
</dbReference>
<dbReference type="SMR" id="B1KYT1"/>
<dbReference type="KEGG" id="cbl:CLK_0517"/>
<dbReference type="HOGENOM" id="CLU_006406_6_1_9"/>
<dbReference type="GO" id="GO:0005737">
    <property type="term" value="C:cytoplasm"/>
    <property type="evidence" value="ECO:0007669"/>
    <property type="project" value="UniProtKB-SubCell"/>
</dbReference>
<dbReference type="GO" id="GO:0004814">
    <property type="term" value="F:arginine-tRNA ligase activity"/>
    <property type="evidence" value="ECO:0007669"/>
    <property type="project" value="UniProtKB-UniRule"/>
</dbReference>
<dbReference type="GO" id="GO:0005524">
    <property type="term" value="F:ATP binding"/>
    <property type="evidence" value="ECO:0007669"/>
    <property type="project" value="UniProtKB-UniRule"/>
</dbReference>
<dbReference type="GO" id="GO:0006420">
    <property type="term" value="P:arginyl-tRNA aminoacylation"/>
    <property type="evidence" value="ECO:0007669"/>
    <property type="project" value="UniProtKB-UniRule"/>
</dbReference>
<dbReference type="CDD" id="cd07956">
    <property type="entry name" value="Anticodon_Ia_Arg"/>
    <property type="match status" value="1"/>
</dbReference>
<dbReference type="CDD" id="cd00671">
    <property type="entry name" value="ArgRS_core"/>
    <property type="match status" value="1"/>
</dbReference>
<dbReference type="FunFam" id="1.10.730.10:FF:000008">
    <property type="entry name" value="Arginine--tRNA ligase"/>
    <property type="match status" value="1"/>
</dbReference>
<dbReference type="FunFam" id="3.30.1360.70:FF:000005">
    <property type="entry name" value="Arginine--tRNA ligase"/>
    <property type="match status" value="1"/>
</dbReference>
<dbReference type="FunFam" id="3.40.50.620:FF:000116">
    <property type="entry name" value="Arginine--tRNA ligase"/>
    <property type="match status" value="1"/>
</dbReference>
<dbReference type="Gene3D" id="3.30.1360.70">
    <property type="entry name" value="Arginyl tRNA synthetase N-terminal domain"/>
    <property type="match status" value="1"/>
</dbReference>
<dbReference type="Gene3D" id="3.40.50.620">
    <property type="entry name" value="HUPs"/>
    <property type="match status" value="1"/>
</dbReference>
<dbReference type="Gene3D" id="1.10.730.10">
    <property type="entry name" value="Isoleucyl-tRNA Synthetase, Domain 1"/>
    <property type="match status" value="1"/>
</dbReference>
<dbReference type="HAMAP" id="MF_00123">
    <property type="entry name" value="Arg_tRNA_synth"/>
    <property type="match status" value="1"/>
</dbReference>
<dbReference type="InterPro" id="IPR001412">
    <property type="entry name" value="aa-tRNA-synth_I_CS"/>
</dbReference>
<dbReference type="InterPro" id="IPR001278">
    <property type="entry name" value="Arg-tRNA-ligase"/>
</dbReference>
<dbReference type="InterPro" id="IPR005148">
    <property type="entry name" value="Arg-tRNA-synth_N"/>
</dbReference>
<dbReference type="InterPro" id="IPR036695">
    <property type="entry name" value="Arg-tRNA-synth_N_sf"/>
</dbReference>
<dbReference type="InterPro" id="IPR035684">
    <property type="entry name" value="ArgRS_core"/>
</dbReference>
<dbReference type="InterPro" id="IPR008909">
    <property type="entry name" value="DALR_anticod-bd"/>
</dbReference>
<dbReference type="InterPro" id="IPR014729">
    <property type="entry name" value="Rossmann-like_a/b/a_fold"/>
</dbReference>
<dbReference type="InterPro" id="IPR009080">
    <property type="entry name" value="tRNAsynth_Ia_anticodon-bd"/>
</dbReference>
<dbReference type="NCBIfam" id="TIGR00456">
    <property type="entry name" value="argS"/>
    <property type="match status" value="1"/>
</dbReference>
<dbReference type="PANTHER" id="PTHR11956:SF5">
    <property type="entry name" value="ARGININE--TRNA LIGASE, CYTOPLASMIC"/>
    <property type="match status" value="1"/>
</dbReference>
<dbReference type="PANTHER" id="PTHR11956">
    <property type="entry name" value="ARGINYL-TRNA SYNTHETASE"/>
    <property type="match status" value="1"/>
</dbReference>
<dbReference type="Pfam" id="PF03485">
    <property type="entry name" value="Arg_tRNA_synt_N"/>
    <property type="match status" value="1"/>
</dbReference>
<dbReference type="Pfam" id="PF05746">
    <property type="entry name" value="DALR_1"/>
    <property type="match status" value="1"/>
</dbReference>
<dbReference type="Pfam" id="PF00750">
    <property type="entry name" value="tRNA-synt_1d"/>
    <property type="match status" value="1"/>
</dbReference>
<dbReference type="PRINTS" id="PR01038">
    <property type="entry name" value="TRNASYNTHARG"/>
</dbReference>
<dbReference type="SMART" id="SM01016">
    <property type="entry name" value="Arg_tRNA_synt_N"/>
    <property type="match status" value="1"/>
</dbReference>
<dbReference type="SMART" id="SM00836">
    <property type="entry name" value="DALR_1"/>
    <property type="match status" value="1"/>
</dbReference>
<dbReference type="SUPFAM" id="SSF47323">
    <property type="entry name" value="Anticodon-binding domain of a subclass of class I aminoacyl-tRNA synthetases"/>
    <property type="match status" value="1"/>
</dbReference>
<dbReference type="SUPFAM" id="SSF55190">
    <property type="entry name" value="Arginyl-tRNA synthetase (ArgRS), N-terminal 'additional' domain"/>
    <property type="match status" value="1"/>
</dbReference>
<dbReference type="SUPFAM" id="SSF52374">
    <property type="entry name" value="Nucleotidylyl transferase"/>
    <property type="match status" value="1"/>
</dbReference>
<dbReference type="PROSITE" id="PS00178">
    <property type="entry name" value="AA_TRNA_LIGASE_I"/>
    <property type="match status" value="1"/>
</dbReference>
<gene>
    <name evidence="1" type="primary">argS</name>
    <name type="ordered locus">CLK_0517</name>
</gene>
<evidence type="ECO:0000255" key="1">
    <source>
        <dbReference type="HAMAP-Rule" id="MF_00123"/>
    </source>
</evidence>
<sequence>MDYKNLVAERIKENTELEVDLIEKLIEIPPKKDMGDYAFPCFQLAKTFRKAPNLIAEELKEKINKEGFEKVVTVGPYLNFFVDKTVLIKDVLEKVLNEKEKYGSSKVGEGKNVVVEYSSPNIAKPFHIGHLFTTAIGNALYKILSFEGYNCIGINHLGDWGTQFGKLISAYRRWVDEEALEKDAIGELLRIYVKFHEEAEKNPELEKEARLNFKKLEDGSEEETELWNRFKDLSLKEFNKVYDMLGIKFDSLAGESFYSDKMDAVVQEIDDKGLLVDSNGAKVVMLDDYNMPPCMIKKSDGATIYATRDLAAAMYRKKTYDFHKCIYVVGTPQALHFKQVFTTLKLMGHDWADDCKHVGFGLVKLANKKLSTRNGDVVFLEDLLNQSVEETLKIINEKNPNLKDKEGTAKKLGIGAVVFTYLKNNRERDIVFDWKEILSFDGETGPYVEYSYARGKSILRKAGELTGEADYSKLSSKEEFELAKLLGGFNDAIMNAIDKLEPAMVTRYVIEVAKAFNKFYNAHGILNAEDNDVKLARVKLVEATCQVIKNALNLLGIDVVEEM</sequence>
<keyword id="KW-0030">Aminoacyl-tRNA synthetase</keyword>
<keyword id="KW-0067">ATP-binding</keyword>
<keyword id="KW-0963">Cytoplasm</keyword>
<keyword id="KW-0436">Ligase</keyword>
<keyword id="KW-0547">Nucleotide-binding</keyword>
<keyword id="KW-0648">Protein biosynthesis</keyword>
<reference key="1">
    <citation type="journal article" date="2007" name="PLoS ONE">
        <title>Analysis of the neurotoxin complex genes in Clostridium botulinum A1-A4 and B1 strains: BoNT/A3, /Ba4 and /B1 clusters are located within plasmids.</title>
        <authorList>
            <person name="Smith T.J."/>
            <person name="Hill K.K."/>
            <person name="Foley B.T."/>
            <person name="Detter J.C."/>
            <person name="Munk A.C."/>
            <person name="Bruce D.C."/>
            <person name="Doggett N.A."/>
            <person name="Smith L.A."/>
            <person name="Marks J.D."/>
            <person name="Xie G."/>
            <person name="Brettin T.S."/>
        </authorList>
    </citation>
    <scope>NUCLEOTIDE SEQUENCE [LARGE SCALE GENOMIC DNA]</scope>
    <source>
        <strain>Loch Maree / Type A3</strain>
    </source>
</reference>
<name>SYR_CLOBM</name>
<comment type="catalytic activity">
    <reaction evidence="1">
        <text>tRNA(Arg) + L-arginine + ATP = L-arginyl-tRNA(Arg) + AMP + diphosphate</text>
        <dbReference type="Rhea" id="RHEA:20301"/>
        <dbReference type="Rhea" id="RHEA-COMP:9658"/>
        <dbReference type="Rhea" id="RHEA-COMP:9673"/>
        <dbReference type="ChEBI" id="CHEBI:30616"/>
        <dbReference type="ChEBI" id="CHEBI:32682"/>
        <dbReference type="ChEBI" id="CHEBI:33019"/>
        <dbReference type="ChEBI" id="CHEBI:78442"/>
        <dbReference type="ChEBI" id="CHEBI:78513"/>
        <dbReference type="ChEBI" id="CHEBI:456215"/>
        <dbReference type="EC" id="6.1.1.19"/>
    </reaction>
</comment>
<comment type="subunit">
    <text evidence="1">Monomer.</text>
</comment>
<comment type="subcellular location">
    <subcellularLocation>
        <location evidence="1">Cytoplasm</location>
    </subcellularLocation>
</comment>
<comment type="similarity">
    <text evidence="1">Belongs to the class-I aminoacyl-tRNA synthetase family.</text>
</comment>
<protein>
    <recommendedName>
        <fullName evidence="1">Arginine--tRNA ligase</fullName>
        <ecNumber evidence="1">6.1.1.19</ecNumber>
    </recommendedName>
    <alternativeName>
        <fullName evidence="1">Arginyl-tRNA synthetase</fullName>
        <shortName evidence="1">ArgRS</shortName>
    </alternativeName>
</protein>